<protein>
    <recommendedName>
        <fullName evidence="1">Protein GrpE</fullName>
    </recommendedName>
    <alternativeName>
        <fullName evidence="1">HSP-70 cofactor</fullName>
    </alternativeName>
</protein>
<dbReference type="EMBL" id="CP000926">
    <property type="protein sequence ID" value="ABZ00616.1"/>
    <property type="molecule type" value="Genomic_DNA"/>
</dbReference>
<dbReference type="RefSeq" id="WP_012274256.1">
    <property type="nucleotide sequence ID" value="NC_010322.1"/>
</dbReference>
<dbReference type="SMR" id="B0KIS6"/>
<dbReference type="KEGG" id="ppg:PputGB1_4729"/>
<dbReference type="eggNOG" id="COG0576">
    <property type="taxonomic scope" value="Bacteria"/>
</dbReference>
<dbReference type="HOGENOM" id="CLU_057217_6_0_6"/>
<dbReference type="Proteomes" id="UP000002157">
    <property type="component" value="Chromosome"/>
</dbReference>
<dbReference type="GO" id="GO:0005829">
    <property type="term" value="C:cytosol"/>
    <property type="evidence" value="ECO:0007669"/>
    <property type="project" value="TreeGrafter"/>
</dbReference>
<dbReference type="GO" id="GO:0000774">
    <property type="term" value="F:adenyl-nucleotide exchange factor activity"/>
    <property type="evidence" value="ECO:0007669"/>
    <property type="project" value="InterPro"/>
</dbReference>
<dbReference type="GO" id="GO:0042803">
    <property type="term" value="F:protein homodimerization activity"/>
    <property type="evidence" value="ECO:0007669"/>
    <property type="project" value="InterPro"/>
</dbReference>
<dbReference type="GO" id="GO:0051087">
    <property type="term" value="F:protein-folding chaperone binding"/>
    <property type="evidence" value="ECO:0007669"/>
    <property type="project" value="InterPro"/>
</dbReference>
<dbReference type="GO" id="GO:0051082">
    <property type="term" value="F:unfolded protein binding"/>
    <property type="evidence" value="ECO:0007669"/>
    <property type="project" value="TreeGrafter"/>
</dbReference>
<dbReference type="GO" id="GO:0006457">
    <property type="term" value="P:protein folding"/>
    <property type="evidence" value="ECO:0007669"/>
    <property type="project" value="InterPro"/>
</dbReference>
<dbReference type="CDD" id="cd00446">
    <property type="entry name" value="GrpE"/>
    <property type="match status" value="1"/>
</dbReference>
<dbReference type="FunFam" id="2.30.22.10:FF:000001">
    <property type="entry name" value="Protein GrpE"/>
    <property type="match status" value="1"/>
</dbReference>
<dbReference type="Gene3D" id="3.90.20.20">
    <property type="match status" value="1"/>
</dbReference>
<dbReference type="Gene3D" id="2.30.22.10">
    <property type="entry name" value="Head domain of nucleotide exchange factor GrpE"/>
    <property type="match status" value="1"/>
</dbReference>
<dbReference type="HAMAP" id="MF_01151">
    <property type="entry name" value="GrpE"/>
    <property type="match status" value="1"/>
</dbReference>
<dbReference type="InterPro" id="IPR000740">
    <property type="entry name" value="GrpE"/>
</dbReference>
<dbReference type="InterPro" id="IPR013805">
    <property type="entry name" value="GrpE_coiled_coil"/>
</dbReference>
<dbReference type="InterPro" id="IPR009012">
    <property type="entry name" value="GrpE_head"/>
</dbReference>
<dbReference type="NCBIfam" id="NF010737">
    <property type="entry name" value="PRK14139.1"/>
    <property type="match status" value="1"/>
</dbReference>
<dbReference type="NCBIfam" id="NF010738">
    <property type="entry name" value="PRK14140.1"/>
    <property type="match status" value="1"/>
</dbReference>
<dbReference type="NCBIfam" id="NF010748">
    <property type="entry name" value="PRK14150.1"/>
    <property type="match status" value="1"/>
</dbReference>
<dbReference type="NCBIfam" id="NF010749">
    <property type="entry name" value="PRK14151.1"/>
    <property type="match status" value="1"/>
</dbReference>
<dbReference type="PANTHER" id="PTHR21237">
    <property type="entry name" value="GRPE PROTEIN"/>
    <property type="match status" value="1"/>
</dbReference>
<dbReference type="PANTHER" id="PTHR21237:SF23">
    <property type="entry name" value="GRPE PROTEIN HOMOLOG, MITOCHONDRIAL"/>
    <property type="match status" value="1"/>
</dbReference>
<dbReference type="Pfam" id="PF01025">
    <property type="entry name" value="GrpE"/>
    <property type="match status" value="1"/>
</dbReference>
<dbReference type="PRINTS" id="PR00773">
    <property type="entry name" value="GRPEPROTEIN"/>
</dbReference>
<dbReference type="SUPFAM" id="SSF58014">
    <property type="entry name" value="Coiled-coil domain of nucleotide exchange factor GrpE"/>
    <property type="match status" value="1"/>
</dbReference>
<dbReference type="SUPFAM" id="SSF51064">
    <property type="entry name" value="Head domain of nucleotide exchange factor GrpE"/>
    <property type="match status" value="1"/>
</dbReference>
<dbReference type="PROSITE" id="PS01071">
    <property type="entry name" value="GRPE"/>
    <property type="match status" value="1"/>
</dbReference>
<feature type="chain" id="PRO_1000085123" description="Protein GrpE">
    <location>
        <begin position="1"/>
        <end position="184"/>
    </location>
</feature>
<accession>B0KIS6</accession>
<comment type="function">
    <text evidence="1">Participates actively in the response to hyperosmotic and heat shock by preventing the aggregation of stress-denatured proteins, in association with DnaK and GrpE. It is the nucleotide exchange factor for DnaK and may function as a thermosensor. Unfolded proteins bind initially to DnaJ; upon interaction with the DnaJ-bound protein, DnaK hydrolyzes its bound ATP, resulting in the formation of a stable complex. GrpE releases ADP from DnaK; ATP binding to DnaK triggers the release of the substrate protein, thus completing the reaction cycle. Several rounds of ATP-dependent interactions between DnaJ, DnaK and GrpE are required for fully efficient folding.</text>
</comment>
<comment type="subunit">
    <text evidence="1">Homodimer.</text>
</comment>
<comment type="subcellular location">
    <subcellularLocation>
        <location evidence="1">Cytoplasm</location>
    </subcellularLocation>
</comment>
<comment type="similarity">
    <text evidence="1">Belongs to the GrpE family.</text>
</comment>
<keyword id="KW-0143">Chaperone</keyword>
<keyword id="KW-0963">Cytoplasm</keyword>
<keyword id="KW-0346">Stress response</keyword>
<organism>
    <name type="scientific">Pseudomonas putida (strain GB-1)</name>
    <dbReference type="NCBI Taxonomy" id="76869"/>
    <lineage>
        <taxon>Bacteria</taxon>
        <taxon>Pseudomonadati</taxon>
        <taxon>Pseudomonadota</taxon>
        <taxon>Gammaproteobacteria</taxon>
        <taxon>Pseudomonadales</taxon>
        <taxon>Pseudomonadaceae</taxon>
        <taxon>Pseudomonas</taxon>
    </lineage>
</organism>
<gene>
    <name evidence="1" type="primary">grpE</name>
    <name type="ordered locus">PputGB1_4729</name>
</gene>
<proteinExistence type="inferred from homology"/>
<name>GRPE_PSEPG</name>
<sequence length="184" mass="20378">MADDQLNEKDLNAEEAAAVDNGARVQELEEQLAAAKDQSLRVAAEAQNSIRRAEQEVDKARKFALEKFSSDLLPVIDSLELALAHSSADDEHVKQIREGVELTLKMFQDTLKRYNLEAVDPHGQPFNPEHHQAMAMQENAEVEPNSVLNVFQKGYLLNGRLLRPAMVVVSKAPAAPQPSIDEKA</sequence>
<evidence type="ECO:0000255" key="1">
    <source>
        <dbReference type="HAMAP-Rule" id="MF_01151"/>
    </source>
</evidence>
<reference key="1">
    <citation type="submission" date="2008-01" db="EMBL/GenBank/DDBJ databases">
        <title>Complete sequence of Pseudomonas putida GB-1.</title>
        <authorList>
            <consortium name="US DOE Joint Genome Institute"/>
            <person name="Copeland A."/>
            <person name="Lucas S."/>
            <person name="Lapidus A."/>
            <person name="Barry K."/>
            <person name="Glavina del Rio T."/>
            <person name="Dalin E."/>
            <person name="Tice H."/>
            <person name="Pitluck S."/>
            <person name="Bruce D."/>
            <person name="Goodwin L."/>
            <person name="Chertkov O."/>
            <person name="Brettin T."/>
            <person name="Detter J.C."/>
            <person name="Han C."/>
            <person name="Kuske C.R."/>
            <person name="Schmutz J."/>
            <person name="Larimer F."/>
            <person name="Land M."/>
            <person name="Hauser L."/>
            <person name="Kyrpides N."/>
            <person name="Kim E."/>
            <person name="McCarthy J.K."/>
            <person name="Richardson P."/>
        </authorList>
    </citation>
    <scope>NUCLEOTIDE SEQUENCE [LARGE SCALE GENOMIC DNA]</scope>
    <source>
        <strain>GB-1</strain>
    </source>
</reference>